<accession>A2S127</accession>
<accession>A2S126</accession>
<comment type="function">
    <text evidence="1">Catalyzes the isomerization between 2-isopropylmalate and 3-isopropylmalate, via the formation of 2-isopropylmaleate.</text>
</comment>
<comment type="catalytic activity">
    <reaction evidence="1">
        <text>(2R,3S)-3-isopropylmalate = (2S)-2-isopropylmalate</text>
        <dbReference type="Rhea" id="RHEA:32287"/>
        <dbReference type="ChEBI" id="CHEBI:1178"/>
        <dbReference type="ChEBI" id="CHEBI:35121"/>
        <dbReference type="EC" id="4.2.1.33"/>
    </reaction>
</comment>
<comment type="cofactor">
    <cofactor evidence="1">
        <name>[4Fe-4S] cluster</name>
        <dbReference type="ChEBI" id="CHEBI:49883"/>
    </cofactor>
    <text evidence="1">Binds 1 [4Fe-4S] cluster per subunit.</text>
</comment>
<comment type="pathway">
    <text evidence="1">Amino-acid biosynthesis; L-leucine biosynthesis; L-leucine from 3-methyl-2-oxobutanoate: step 2/4.</text>
</comment>
<comment type="subunit">
    <text evidence="1">Heterodimer of LeuC and LeuD.</text>
</comment>
<comment type="similarity">
    <text evidence="1">Belongs to the aconitase/IPM isomerase family. LeuC type 1 subfamily.</text>
</comment>
<protein>
    <recommendedName>
        <fullName evidence="1">3-isopropylmalate dehydratase large subunit</fullName>
        <ecNumber evidence="1">4.2.1.33</ecNumber>
    </recommendedName>
    <alternativeName>
        <fullName evidence="1">Alpha-IPM isomerase</fullName>
        <shortName evidence="1">IPMI</shortName>
    </alternativeName>
    <alternativeName>
        <fullName evidence="1">Isopropylmalate isomerase</fullName>
    </alternativeName>
</protein>
<evidence type="ECO:0000255" key="1">
    <source>
        <dbReference type="HAMAP-Rule" id="MF_01026"/>
    </source>
</evidence>
<organism>
    <name type="scientific">Burkholderia mallei (strain NCTC 10229)</name>
    <dbReference type="NCBI Taxonomy" id="412022"/>
    <lineage>
        <taxon>Bacteria</taxon>
        <taxon>Pseudomonadati</taxon>
        <taxon>Pseudomonadota</taxon>
        <taxon>Betaproteobacteria</taxon>
        <taxon>Burkholderiales</taxon>
        <taxon>Burkholderiaceae</taxon>
        <taxon>Burkholderia</taxon>
        <taxon>pseudomallei group</taxon>
    </lineage>
</organism>
<feature type="chain" id="PRO_1000063537" description="3-isopropylmalate dehydratase large subunit">
    <location>
        <begin position="1"/>
        <end position="469"/>
    </location>
</feature>
<feature type="binding site" evidence="1">
    <location>
        <position position="347"/>
    </location>
    <ligand>
        <name>[4Fe-4S] cluster</name>
        <dbReference type="ChEBI" id="CHEBI:49883"/>
    </ligand>
</feature>
<feature type="binding site" evidence="1">
    <location>
        <position position="410"/>
    </location>
    <ligand>
        <name>[4Fe-4S] cluster</name>
        <dbReference type="ChEBI" id="CHEBI:49883"/>
    </ligand>
</feature>
<feature type="binding site" evidence="1">
    <location>
        <position position="413"/>
    </location>
    <ligand>
        <name>[4Fe-4S] cluster</name>
        <dbReference type="ChEBI" id="CHEBI:49883"/>
    </ligand>
</feature>
<proteinExistence type="inferred from homology"/>
<reference key="1">
    <citation type="journal article" date="2010" name="Genome Biol. Evol.">
        <title>Continuing evolution of Burkholderia mallei through genome reduction and large-scale rearrangements.</title>
        <authorList>
            <person name="Losada L."/>
            <person name="Ronning C.M."/>
            <person name="DeShazer D."/>
            <person name="Woods D."/>
            <person name="Fedorova N."/>
            <person name="Kim H.S."/>
            <person name="Shabalina S.A."/>
            <person name="Pearson T.R."/>
            <person name="Brinkac L."/>
            <person name="Tan P."/>
            <person name="Nandi T."/>
            <person name="Crabtree J."/>
            <person name="Badger J."/>
            <person name="Beckstrom-Sternberg S."/>
            <person name="Saqib M."/>
            <person name="Schutzer S.E."/>
            <person name="Keim P."/>
            <person name="Nierman W.C."/>
        </authorList>
    </citation>
    <scope>NUCLEOTIDE SEQUENCE [LARGE SCALE GENOMIC DNA]</scope>
    <source>
        <strain>NCTC 10229</strain>
    </source>
</reference>
<reference key="2">
    <citation type="submission" date="2009-10" db="EMBL/GenBank/DDBJ databases">
        <authorList>
            <person name="Brinkac L.M."/>
            <person name="Harkins D.M."/>
            <person name="Shrivastava S."/>
            <person name="Durkin A.S."/>
            <person name="Sutton G."/>
        </authorList>
    </citation>
    <scope>SEQUENCE REVISION</scope>
</reference>
<sequence length="469" mass="50775">MAQTLYDKLWNSHVVHTEEDGTALLYIDRQLLHEVTSPQAFEGLKLAQRPVWRISANLAVSDHNVPTTDRSHGIADPVSKLQVDTLDANCDAYGITQFKMNDVRQGIVHIIGPEQGATLPGMTIVCGDSHTSTHGAFGALAHGIGTSEVEHVLATQTLLQKKSKNMLVKVEGQLPRGCTAKDIVLAIIGQIGTAGGTGYAIEFGGSTIRALTMEGRMTVCNMAIEAGARAGMVAVDDTTVEYLKGRPFVPTGAEWDQAVEYWKTFRSDEGAQFDRVVELDAAQIVPQVTWGTSPEMVTSIDGRVPDPEREKDPVKRDAMERALAYMALAPNTPIEAIKVDKIFIGSCTNARIEDIRAAAYVVKKLNRRVAPNVRLAMVVPGSGLVKAQAEREGLDKVFTEAGFEWREPGCSMCLAMNADRLEPGERCASTSNRNFEGRQGQGGRTHLVSPAMAAAAAIEGHFVDIRRLG</sequence>
<keyword id="KW-0004">4Fe-4S</keyword>
<keyword id="KW-0028">Amino-acid biosynthesis</keyword>
<keyword id="KW-0100">Branched-chain amino acid biosynthesis</keyword>
<keyword id="KW-0408">Iron</keyword>
<keyword id="KW-0411">Iron-sulfur</keyword>
<keyword id="KW-0432">Leucine biosynthesis</keyword>
<keyword id="KW-0456">Lyase</keyword>
<keyword id="KW-0479">Metal-binding</keyword>
<dbReference type="EC" id="4.2.1.33" evidence="1"/>
<dbReference type="EMBL" id="CP000545">
    <property type="protein sequence ID" value="ABM98811.2"/>
    <property type="molecule type" value="Genomic_DNA"/>
</dbReference>
<dbReference type="RefSeq" id="WP_004187091.1">
    <property type="nucleotide sequence ID" value="NC_008835.1"/>
</dbReference>
<dbReference type="SMR" id="A2S127"/>
<dbReference type="GeneID" id="92977643"/>
<dbReference type="KEGG" id="bml:BMA10229_1848"/>
<dbReference type="HOGENOM" id="CLU_006714_3_4_4"/>
<dbReference type="UniPathway" id="UPA00048">
    <property type="reaction ID" value="UER00071"/>
</dbReference>
<dbReference type="Proteomes" id="UP000002283">
    <property type="component" value="Chromosome II"/>
</dbReference>
<dbReference type="GO" id="GO:0003861">
    <property type="term" value="F:3-isopropylmalate dehydratase activity"/>
    <property type="evidence" value="ECO:0007669"/>
    <property type="project" value="UniProtKB-UniRule"/>
</dbReference>
<dbReference type="GO" id="GO:0051539">
    <property type="term" value="F:4 iron, 4 sulfur cluster binding"/>
    <property type="evidence" value="ECO:0007669"/>
    <property type="project" value="UniProtKB-KW"/>
</dbReference>
<dbReference type="GO" id="GO:0046872">
    <property type="term" value="F:metal ion binding"/>
    <property type="evidence" value="ECO:0007669"/>
    <property type="project" value="UniProtKB-KW"/>
</dbReference>
<dbReference type="GO" id="GO:0009098">
    <property type="term" value="P:L-leucine biosynthetic process"/>
    <property type="evidence" value="ECO:0007669"/>
    <property type="project" value="UniProtKB-UniRule"/>
</dbReference>
<dbReference type="CDD" id="cd01583">
    <property type="entry name" value="IPMI"/>
    <property type="match status" value="1"/>
</dbReference>
<dbReference type="FunFam" id="3.30.499.10:FF:000007">
    <property type="entry name" value="3-isopropylmalate dehydratase large subunit"/>
    <property type="match status" value="1"/>
</dbReference>
<dbReference type="Gene3D" id="3.30.499.10">
    <property type="entry name" value="Aconitase, domain 3"/>
    <property type="match status" value="2"/>
</dbReference>
<dbReference type="HAMAP" id="MF_01026">
    <property type="entry name" value="LeuC_type1"/>
    <property type="match status" value="1"/>
</dbReference>
<dbReference type="InterPro" id="IPR004430">
    <property type="entry name" value="3-IsopropMal_deHydase_lsu"/>
</dbReference>
<dbReference type="InterPro" id="IPR015931">
    <property type="entry name" value="Acnase/IPM_dHydase_lsu_aba_1/3"/>
</dbReference>
<dbReference type="InterPro" id="IPR001030">
    <property type="entry name" value="Acoase/IPM_deHydtase_lsu_aba"/>
</dbReference>
<dbReference type="InterPro" id="IPR018136">
    <property type="entry name" value="Aconitase_4Fe-4S_BS"/>
</dbReference>
<dbReference type="InterPro" id="IPR036008">
    <property type="entry name" value="Aconitase_4Fe-4S_dom"/>
</dbReference>
<dbReference type="InterPro" id="IPR050067">
    <property type="entry name" value="IPM_dehydratase_rel_enz"/>
</dbReference>
<dbReference type="InterPro" id="IPR033941">
    <property type="entry name" value="IPMI_cat"/>
</dbReference>
<dbReference type="NCBIfam" id="TIGR00170">
    <property type="entry name" value="leuC"/>
    <property type="match status" value="1"/>
</dbReference>
<dbReference type="NCBIfam" id="NF004016">
    <property type="entry name" value="PRK05478.1"/>
    <property type="match status" value="1"/>
</dbReference>
<dbReference type="NCBIfam" id="NF009116">
    <property type="entry name" value="PRK12466.1"/>
    <property type="match status" value="1"/>
</dbReference>
<dbReference type="PANTHER" id="PTHR43822:SF9">
    <property type="entry name" value="3-ISOPROPYLMALATE DEHYDRATASE"/>
    <property type="match status" value="1"/>
</dbReference>
<dbReference type="PANTHER" id="PTHR43822">
    <property type="entry name" value="HOMOACONITASE, MITOCHONDRIAL-RELATED"/>
    <property type="match status" value="1"/>
</dbReference>
<dbReference type="Pfam" id="PF00330">
    <property type="entry name" value="Aconitase"/>
    <property type="match status" value="1"/>
</dbReference>
<dbReference type="PRINTS" id="PR00415">
    <property type="entry name" value="ACONITASE"/>
</dbReference>
<dbReference type="SUPFAM" id="SSF53732">
    <property type="entry name" value="Aconitase iron-sulfur domain"/>
    <property type="match status" value="1"/>
</dbReference>
<dbReference type="PROSITE" id="PS00450">
    <property type="entry name" value="ACONITASE_1"/>
    <property type="match status" value="1"/>
</dbReference>
<dbReference type="PROSITE" id="PS01244">
    <property type="entry name" value="ACONITASE_2"/>
    <property type="match status" value="1"/>
</dbReference>
<name>LEUC_BURM9</name>
<gene>
    <name evidence="1" type="primary">leuC</name>
    <name type="ordered locus">BMA10229_1848</name>
</gene>